<feature type="chain" id="PRO_0000372989" description="Non-structural protein 1">
    <location>
        <begin position="1"/>
        <end position="237"/>
    </location>
</feature>
<feature type="region of interest" description="RNA-binding and homodimerization" evidence="1">
    <location>
        <begin position="1"/>
        <end position="73"/>
    </location>
</feature>
<feature type="region of interest" description="CPSF4-binding" evidence="1">
    <location>
        <begin position="180"/>
        <end position="215"/>
    </location>
</feature>
<feature type="region of interest" description="Disordered" evidence="2">
    <location>
        <begin position="205"/>
        <end position="237"/>
    </location>
</feature>
<feature type="region of interest" description="PABPN1-binding" evidence="1">
    <location>
        <begin position="223"/>
        <end position="230"/>
    </location>
</feature>
<feature type="short sequence motif" description="Nuclear localization signal" evidence="1">
    <location>
        <begin position="34"/>
        <end position="38"/>
    </location>
</feature>
<feature type="short sequence motif" description="Nuclear export signal" evidence="1">
    <location>
        <begin position="137"/>
        <end position="146"/>
    </location>
</feature>
<feature type="compositionally biased region" description="Basic and acidic residues" evidence="2">
    <location>
        <begin position="226"/>
        <end position="237"/>
    </location>
</feature>
<name>NS1_I77AA</name>
<proteinExistence type="inferred from homology"/>
<keyword id="KW-0025">Alternative splicing</keyword>
<keyword id="KW-1262">Eukaryotic host gene expression shutoff by virus</keyword>
<keyword id="KW-1035">Host cytoplasm</keyword>
<keyword id="KW-1190">Host gene expression shutoff by virus</keyword>
<keyword id="KW-1192">Host mRNA suppression by virus</keyword>
<keyword id="KW-1048">Host nucleus</keyword>
<keyword id="KW-0945">Host-virus interaction</keyword>
<keyword id="KW-1090">Inhibition of host innate immune response by virus</keyword>
<keyword id="KW-1114">Inhibition of host interferon signaling pathway by virus</keyword>
<keyword id="KW-1102">Inhibition of host PKR by virus</keyword>
<keyword id="KW-1103">Inhibition of host pre-mRNA processing by virus</keyword>
<keyword id="KW-1088">Inhibition of host RIG-I by virus</keyword>
<keyword id="KW-1113">Inhibition of host RLR pathway by virus</keyword>
<keyword id="KW-0922">Interferon antiviral system evasion</keyword>
<keyword id="KW-0694">RNA-binding</keyword>
<keyword id="KW-0832">Ubl conjugation</keyword>
<keyword id="KW-0899">Viral immunoevasion</keyword>
<protein>
    <recommendedName>
        <fullName evidence="1">Non-structural protein 1</fullName>
        <shortName evidence="1">NS1</shortName>
    </recommendedName>
    <alternativeName>
        <fullName evidence="1">NS1A</fullName>
    </alternativeName>
</protein>
<evidence type="ECO:0000255" key="1">
    <source>
        <dbReference type="HAMAP-Rule" id="MF_04066"/>
    </source>
</evidence>
<evidence type="ECO:0000256" key="2">
    <source>
        <dbReference type="SAM" id="MobiDB-lite"/>
    </source>
</evidence>
<comment type="function">
    <text evidence="1">Inhibits post-transcriptional processing of cellular pre-mRNA, by binding and inhibiting two cellular proteins that are required for the 3'-end processing of cellular pre-mRNAs: the 30 kDa cleavage and polyadenylation specificity factor/CPSF4 and the poly(A)-binding protein 2/PABPN1. In turn, unprocessed 3' end pre-mRNAs accumulate in the host nucleus and are no longer exported to the cytoplasm. Cellular protein synthesis is thereby shut off very early after virus infection. Viral protein synthesis is not affected by the inhibition of the cellular 3' end processing machinery because the poly(A) tails of viral mRNAs are produced by the viral polymerase through a stuttering mechanism. Prevents the establishment of the cellular antiviral state by inhibiting TRIM25-mediated RIGI ubiquitination, which normally triggers the antiviral transduction signal that leads to the activation of type I IFN genes by transcription factors IRF3 and IRF7. Also binds poly(A) and U6 snRNA. Inhibits the integrated stress response (ISR) in the infected cell by blocking dsRNA binding by EIF2AK2/PKR and further phosphorylation of EIF2S1/EIF-2ALPHA. Stress granule formation is thus inhibited, which allows protein synthesis and viral replication.</text>
</comment>
<comment type="subunit">
    <text evidence="1">Homodimer. Interacts with host TRIM25 (via coiled coil); this interaction specifically inhibits TRIM25 multimerization and TRIM25-mediated RIGI CARD ubiquitination. Interacts with human EIF2AK2/PKR, CPSF4, IVNS1ABP and PABPN1.</text>
</comment>
<comment type="subcellular location">
    <subcellularLocation>
        <location evidence="1">Host nucleus</location>
    </subcellularLocation>
    <subcellularLocation>
        <location evidence="1">Host cytoplasm</location>
    </subcellularLocation>
    <text evidence="1">In uninfected, transfected cells, NS1 is localized in the nucleus. Only in virus infected cells, the nuclear export signal is unveiled, presumably by a viral protein, and a fraction of NS1 is exported in the cytoplasm.</text>
</comment>
<comment type="alternative products">
    <event type="alternative splicing"/>
    <isoform>
        <id>A4GBY3-1</id>
        <name>NS1</name>
        <sequence type="displayed"/>
    </isoform>
    <isoform>
        <id>A4GBY2-1</id>
        <name>NEP</name>
        <name>NS2</name>
        <sequence type="external"/>
    </isoform>
</comment>
<comment type="domain">
    <text evidence="1">The dsRNA-binding region is required for suppression of RNA silencing.</text>
</comment>
<comment type="PTM">
    <text evidence="1">Upon interferon induction, ISGylated via host HERC5; this results in the impairment of NS1 interaction with RNA targets due to its inability to form homodimers and to interact with host EIF2AK2/PKR.</text>
</comment>
<comment type="similarity">
    <text evidence="1">Belongs to the influenza A viruses NS1 family.</text>
</comment>
<accession>A4GBY3</accession>
<dbReference type="EMBL" id="CY020297">
    <property type="protein sequence ID" value="ABO38070.1"/>
    <property type="molecule type" value="Viral_cRNA"/>
</dbReference>
<dbReference type="SMR" id="A4GBY3"/>
<dbReference type="Proteomes" id="UP000008025">
    <property type="component" value="Genome"/>
</dbReference>
<dbReference type="GO" id="GO:0030430">
    <property type="term" value="C:host cell cytoplasm"/>
    <property type="evidence" value="ECO:0007669"/>
    <property type="project" value="UniProtKB-SubCell"/>
</dbReference>
<dbReference type="GO" id="GO:0042025">
    <property type="term" value="C:host cell nucleus"/>
    <property type="evidence" value="ECO:0007669"/>
    <property type="project" value="UniProtKB-SubCell"/>
</dbReference>
<dbReference type="GO" id="GO:0030291">
    <property type="term" value="F:protein serine/threonine kinase inhibitor activity"/>
    <property type="evidence" value="ECO:0007669"/>
    <property type="project" value="UniProtKB-KW"/>
</dbReference>
<dbReference type="GO" id="GO:0003723">
    <property type="term" value="F:RNA binding"/>
    <property type="evidence" value="ECO:0007669"/>
    <property type="project" value="UniProtKB-KW"/>
</dbReference>
<dbReference type="GO" id="GO:0039540">
    <property type="term" value="P:symbiont-mediated suppression of host cytoplasmic pattern recognition receptor signaling pathway via inhibition of RIG-I activity"/>
    <property type="evidence" value="ECO:0007669"/>
    <property type="project" value="UniProtKB-KW"/>
</dbReference>
<dbReference type="GO" id="GO:0039657">
    <property type="term" value="P:symbiont-mediated suppression of host gene expression"/>
    <property type="evidence" value="ECO:0007669"/>
    <property type="project" value="UniProtKB-KW"/>
</dbReference>
<dbReference type="GO" id="GO:0039524">
    <property type="term" value="P:symbiont-mediated suppression of host mRNA processing"/>
    <property type="evidence" value="ECO:0007669"/>
    <property type="project" value="UniProtKB-KW"/>
</dbReference>
<dbReference type="GO" id="GO:0039580">
    <property type="term" value="P:symbiont-mediated suppression of host PKR/eIFalpha signaling"/>
    <property type="evidence" value="ECO:0007669"/>
    <property type="project" value="UniProtKB-KW"/>
</dbReference>
<dbReference type="GO" id="GO:0039502">
    <property type="term" value="P:symbiont-mediated suppression of host type I interferon-mediated signaling pathway"/>
    <property type="evidence" value="ECO:0007669"/>
    <property type="project" value="UniProtKB-KW"/>
</dbReference>
<dbReference type="FunFam" id="1.10.287.10:FF:000001">
    <property type="entry name" value="Non-structural protein 1"/>
    <property type="match status" value="1"/>
</dbReference>
<dbReference type="FunFam" id="3.30.420.330:FF:000001">
    <property type="entry name" value="Non-structural protein 1"/>
    <property type="match status" value="1"/>
</dbReference>
<dbReference type="Gene3D" id="3.30.420.330">
    <property type="entry name" value="Influenza virus non-structural protein, effector domain"/>
    <property type="match status" value="1"/>
</dbReference>
<dbReference type="Gene3D" id="1.10.287.10">
    <property type="entry name" value="S15/NS1, RNA-binding"/>
    <property type="match status" value="1"/>
</dbReference>
<dbReference type="HAMAP" id="MF_04066">
    <property type="entry name" value="INFV_NS1"/>
    <property type="match status" value="1"/>
</dbReference>
<dbReference type="InterPro" id="IPR004208">
    <property type="entry name" value="NS1"/>
</dbReference>
<dbReference type="InterPro" id="IPR000256">
    <property type="entry name" value="NS1A"/>
</dbReference>
<dbReference type="InterPro" id="IPR038064">
    <property type="entry name" value="NS1A_effect_dom-like_sf"/>
</dbReference>
<dbReference type="InterPro" id="IPR009068">
    <property type="entry name" value="uS15_NS1_RNA-bd_sf"/>
</dbReference>
<dbReference type="Pfam" id="PF00600">
    <property type="entry name" value="Flu_NS1"/>
    <property type="match status" value="1"/>
</dbReference>
<dbReference type="SUPFAM" id="SSF143021">
    <property type="entry name" value="Ns1 effector domain-like"/>
    <property type="match status" value="1"/>
</dbReference>
<dbReference type="SUPFAM" id="SSF47060">
    <property type="entry name" value="S15/NS1 RNA-binding domain"/>
    <property type="match status" value="1"/>
</dbReference>
<organismHost>
    <name type="scientific">Aves</name>
    <dbReference type="NCBI Taxonomy" id="8782"/>
</organismHost>
<organismHost>
    <name type="scientific">Homo sapiens</name>
    <name type="common">Human</name>
    <dbReference type="NCBI Taxonomy" id="9606"/>
</organismHost>
<organismHost>
    <name type="scientific">Sus scrofa</name>
    <name type="common">Pig</name>
    <dbReference type="NCBI Taxonomy" id="9823"/>
</organismHost>
<reference key="1">
    <citation type="submission" date="2007-03" db="EMBL/GenBank/DDBJ databases">
        <title>The NIAID influenza genome sequencing project.</title>
        <authorList>
            <person name="Ghedin E."/>
            <person name="Spiro D."/>
            <person name="Miller N."/>
            <person name="Zaborsky J."/>
            <person name="Feldblyum T."/>
            <person name="Subbu V."/>
            <person name="Shumway M."/>
            <person name="Sparenborg J."/>
            <person name="Groveman L."/>
            <person name="Halpin R."/>
            <person name="Sitz J."/>
            <person name="Koo H."/>
            <person name="Salzberg S.L."/>
            <person name="Webster R.G."/>
            <person name="Hoffmann E."/>
            <person name="Krauss S."/>
            <person name="Naeve C."/>
            <person name="Bao Y."/>
            <person name="Bolotov P."/>
            <person name="Dernovoy D."/>
            <person name="Kiryutin B."/>
            <person name="Lipman D.J."/>
            <person name="Tatusova T."/>
        </authorList>
    </citation>
    <scope>NUCLEOTIDE SEQUENCE [GENOMIC RNA]</scope>
</reference>
<reference key="2">
    <citation type="submission" date="2007-03" db="EMBL/GenBank/DDBJ databases">
        <authorList>
            <consortium name="The NIAID Influenza Genome Sequencing Consortium"/>
        </authorList>
    </citation>
    <scope>NUCLEOTIDE SEQUENCE [GENOMIC RNA]</scope>
</reference>
<organism>
    <name type="scientific">Influenza A virus (strain A/Brazil/11/1978 H1N1)</name>
    <dbReference type="NCBI Taxonomy" id="393560"/>
    <lineage>
        <taxon>Viruses</taxon>
        <taxon>Riboviria</taxon>
        <taxon>Orthornavirae</taxon>
        <taxon>Negarnaviricota</taxon>
        <taxon>Polyploviricotina</taxon>
        <taxon>Insthoviricetes</taxon>
        <taxon>Articulavirales</taxon>
        <taxon>Orthomyxoviridae</taxon>
        <taxon>Alphainfluenzavirus</taxon>
        <taxon>Alphainfluenzavirus influenzae</taxon>
        <taxon>Influenza A virus</taxon>
    </lineage>
</organism>
<sequence length="237" mass="26890">MDPNTVSSFQVDCFLWHVRKQVADQELGDAPFLDRLRRDQKSLRGRGSTLGLNIETATCVGKQIVERILKEESDEALKMTMASAPASRYLTDMTIEEMSRDWFMLMPKQKVAGPLCIRMDQAIMDKNIILKANFSVIFDRLETLILLRAFTEEGAIVGEISPLPSLPGHTNEDVKNAIGVLIGGLEWNDNTVRVSKTLQRFAWRSSNENGRPPLTPKQKRKMARTIRSEVRRNKMAD</sequence>
<gene>
    <name evidence="1" type="primary">NS</name>
</gene>